<dbReference type="EC" id="3.5.1.125" evidence="3"/>
<dbReference type="EMBL" id="FN869568">
    <property type="protein sequence ID" value="CBV43548.1"/>
    <property type="molecule type" value="Genomic_DNA"/>
</dbReference>
<dbReference type="RefSeq" id="WP_013333420.1">
    <property type="nucleotide sequence ID" value="NC_014532.2"/>
</dbReference>
<dbReference type="SMR" id="E1V7W0"/>
<dbReference type="STRING" id="768066.HELO_3664"/>
<dbReference type="GeneID" id="91011062"/>
<dbReference type="KEGG" id="hel:HELO_3664"/>
<dbReference type="eggNOG" id="COG3608">
    <property type="taxonomic scope" value="Bacteria"/>
</dbReference>
<dbReference type="HOGENOM" id="CLU_035605_1_0_6"/>
<dbReference type="OrthoDB" id="9782876at2"/>
<dbReference type="BioCyc" id="MetaCyc:MONOMER-20122"/>
<dbReference type="BRENDA" id="3.5.1.125">
    <property type="organism ID" value="2569"/>
</dbReference>
<dbReference type="Proteomes" id="UP000008707">
    <property type="component" value="Chromosome"/>
</dbReference>
<dbReference type="GO" id="GO:0005737">
    <property type="term" value="C:cytoplasm"/>
    <property type="evidence" value="ECO:0000314"/>
    <property type="project" value="UniProtKB"/>
</dbReference>
<dbReference type="GO" id="GO:0016811">
    <property type="term" value="F:hydrolase activity, acting on carbon-nitrogen (but not peptide) bonds, in linear amides"/>
    <property type="evidence" value="ECO:0000314"/>
    <property type="project" value="UniProtKB"/>
</dbReference>
<dbReference type="GO" id="GO:0016788">
    <property type="term" value="F:hydrolase activity, acting on ester bonds"/>
    <property type="evidence" value="ECO:0007669"/>
    <property type="project" value="InterPro"/>
</dbReference>
<dbReference type="GO" id="GO:0046872">
    <property type="term" value="F:metal ion binding"/>
    <property type="evidence" value="ECO:0007669"/>
    <property type="project" value="UniProtKB-KW"/>
</dbReference>
<dbReference type="GO" id="GO:0042400">
    <property type="term" value="P:ectoine catabolic process"/>
    <property type="evidence" value="ECO:0000315"/>
    <property type="project" value="UniProtKB"/>
</dbReference>
<dbReference type="CDD" id="cd06252">
    <property type="entry name" value="M14_ASTE_ASPA-like"/>
    <property type="match status" value="1"/>
</dbReference>
<dbReference type="FunFam" id="3.40.630.10:FF:000210">
    <property type="entry name" value="N-alpha-acetyl-L-2,4-diaminobutyric acid deacetylase"/>
    <property type="match status" value="1"/>
</dbReference>
<dbReference type="Gene3D" id="3.40.630.10">
    <property type="entry name" value="Zn peptidases"/>
    <property type="match status" value="1"/>
</dbReference>
<dbReference type="InterPro" id="IPR055438">
    <property type="entry name" value="AstE_AspA_cat"/>
</dbReference>
<dbReference type="InterPro" id="IPR014336">
    <property type="entry name" value="DoeB"/>
</dbReference>
<dbReference type="InterPro" id="IPR043795">
    <property type="entry name" value="N-alpha-Ac-DABA-like"/>
</dbReference>
<dbReference type="InterPro" id="IPR053138">
    <property type="entry name" value="N-alpha-Ac-DABA_deacetylase"/>
</dbReference>
<dbReference type="NCBIfam" id="TIGR02994">
    <property type="entry name" value="ectoine_eutE"/>
    <property type="match status" value="1"/>
</dbReference>
<dbReference type="PANTHER" id="PTHR37326">
    <property type="entry name" value="BLL3975 PROTEIN"/>
    <property type="match status" value="1"/>
</dbReference>
<dbReference type="PANTHER" id="PTHR37326:SF1">
    <property type="entry name" value="BLL3975 PROTEIN"/>
    <property type="match status" value="1"/>
</dbReference>
<dbReference type="Pfam" id="PF24827">
    <property type="entry name" value="AstE_AspA_cat"/>
    <property type="match status" value="1"/>
</dbReference>
<dbReference type="PIRSF" id="PIRSF039012">
    <property type="entry name" value="ASP"/>
    <property type="match status" value="1"/>
</dbReference>
<dbReference type="SUPFAM" id="SSF53187">
    <property type="entry name" value="Zn-dependent exopeptidases"/>
    <property type="match status" value="1"/>
</dbReference>
<gene>
    <name evidence="4" type="primary">doeB</name>
    <name type="ordered locus">HELO_3664</name>
</gene>
<protein>
    <recommendedName>
        <fullName>N-alpha-acetyl-L-2,4-diaminobutyric acid deacetylase</fullName>
        <shortName>N-alpha-Ac-DABA</shortName>
        <ecNumber evidence="3">3.5.1.125</ecNumber>
    </recommendedName>
    <alternativeName>
        <fullName>N-alpha-acetyl diaminobutyric acid deacetylase</fullName>
    </alternativeName>
</protein>
<name>DOEB_HALED</name>
<proteinExistence type="evidence at protein level"/>
<accession>E1V7W0</accession>
<organism>
    <name type="scientific">Halomonas elongata (strain ATCC 33173 / DSM 2581 / NBRC 15536 / NCIMB 2198 / 1H9)</name>
    <dbReference type="NCBI Taxonomy" id="768066"/>
    <lineage>
        <taxon>Bacteria</taxon>
        <taxon>Pseudomonadati</taxon>
        <taxon>Pseudomonadota</taxon>
        <taxon>Gammaproteobacteria</taxon>
        <taxon>Oceanospirillales</taxon>
        <taxon>Halomonadaceae</taxon>
        <taxon>Halomonas</taxon>
    </lineage>
</organism>
<comment type="function">
    <text evidence="3">Involved in the degradation of ectoine, which allows H.elongata to utilize ectoine as both a carbon and a nitrogen source for growth. Catalyzes the deacetylation of N-alpha-acetyl-L-2,4-diaminobutyrate (N-alpha-Ac-DABA) to yield L-2,4-diaminobutyrate (DABA).</text>
</comment>
<comment type="catalytic activity">
    <reaction evidence="3">
        <text>(2S)-2-acetamido-4-aminobutanoate + H2O = L-2,4-diaminobutanoate + acetate</text>
        <dbReference type="Rhea" id="RHEA:40951"/>
        <dbReference type="ChEBI" id="CHEBI:15377"/>
        <dbReference type="ChEBI" id="CHEBI:30089"/>
        <dbReference type="ChEBI" id="CHEBI:58761"/>
        <dbReference type="ChEBI" id="CHEBI:77587"/>
        <dbReference type="EC" id="3.5.1.125"/>
    </reaction>
    <physiologicalReaction direction="left-to-right" evidence="3">
        <dbReference type="Rhea" id="RHEA:40952"/>
    </physiologicalReaction>
</comment>
<comment type="cofactor">
    <cofactor evidence="1">
        <name>Zn(2+)</name>
        <dbReference type="ChEBI" id="CHEBI:29105"/>
    </cofactor>
    <text evidence="1">Binds 1 zinc ion per subunit.</text>
</comment>
<comment type="subcellular location">
    <subcellularLocation>
        <location evidence="3">Cytoplasm</location>
    </subcellularLocation>
</comment>
<comment type="disruption phenotype">
    <text evidence="3">Cells lacking this gene are unable to grow on ectoine as carbon and nitrogen sources and accumulate N-alpha-acetyl-L-2,4-diaminobutyrate (N-alpha-Ac-DABA).</text>
</comment>
<comment type="similarity">
    <text evidence="5">Belongs to the DoeB deacetylase family.</text>
</comment>
<feature type="chain" id="PRO_0000428758" description="N-alpha-acetyl-L-2,4-diaminobutyric acid deacetylase">
    <location>
        <begin position="1"/>
        <end position="342"/>
    </location>
</feature>
<feature type="region of interest" description="Disordered" evidence="2">
    <location>
        <begin position="103"/>
        <end position="124"/>
    </location>
</feature>
<keyword id="KW-0963">Cytoplasm</keyword>
<keyword id="KW-0378">Hydrolase</keyword>
<keyword id="KW-0479">Metal-binding</keyword>
<keyword id="KW-0862">Zinc</keyword>
<sequence length="342" mass="36586">MSKQPGQQRPSPISATVDFEADGVQHGFLKLPISNDESAWGAVMIPVTVVKRGEGPTALLTGGNHGDEYEGITALQKLSSRLRAEDVQGRVIIVPMMNTPACTAGRRTSPMDGGNLNRSFPGDPDGSVTEKIADYFTRVLVPMSDVVLDLHSGGRTLDIIPFAASHVLDDAEQQRRALEGAKAFGAPYAIMMFELDAEALFDTAVERQGKIFVATELGGGGTSTPESLAITERGIDNFLVHYGLVEGELQVPDEPQIYLDMPDASCYVQSEHTGLLELTVALGDPVTQGQVIARVYDMTRSGVAPVEYRAERDGVLAARRFPASVNMGDTIAVIAEVVESLG</sequence>
<evidence type="ECO:0000250" key="1"/>
<evidence type="ECO:0000256" key="2">
    <source>
        <dbReference type="SAM" id="MobiDB-lite"/>
    </source>
</evidence>
<evidence type="ECO:0000269" key="3">
    <source>
    </source>
</evidence>
<evidence type="ECO:0000303" key="4">
    <source>
    </source>
</evidence>
<evidence type="ECO:0000305" key="5"/>
<reference key="1">
    <citation type="journal article" date="2011" name="Environ. Microbiol.">
        <title>A blueprint of ectoine metabolism from the genome of the industrial producer Halomonas elongata DSM 2581(T).</title>
        <authorList>
            <person name="Schwibbert K."/>
            <person name="Marin-Sanguino A."/>
            <person name="Bagyan I."/>
            <person name="Heidrich G."/>
            <person name="Lentzen G."/>
            <person name="Seitz H."/>
            <person name="Rampp M."/>
            <person name="Schuster S.C."/>
            <person name="Klenk H.P."/>
            <person name="Pfeiffer F."/>
            <person name="Oesterhelt D."/>
            <person name="Kunte H.J."/>
        </authorList>
    </citation>
    <scope>NUCLEOTIDE SEQUENCE [LARGE SCALE GENOMIC DNA]</scope>
    <scope>FUNCTION</scope>
    <scope>CATALYTIC ACTIVITY</scope>
    <scope>DISRUPTION PHENOTYPE</scope>
    <scope>SUBCELLULAR LOCATION</scope>
    <scope>NOMENCLATURE</scope>
    <source>
        <strain>ATCC 33173 / DSM 2581 / NBRC 15536 / NCIMB 2198 / 1H9</strain>
    </source>
</reference>